<name>JKIP2_HUMAN</name>
<evidence type="ECO:0000255" key="1"/>
<evidence type="ECO:0000256" key="2">
    <source>
        <dbReference type="SAM" id="MobiDB-lite"/>
    </source>
</evidence>
<evidence type="ECO:0000269" key="3">
    <source>
    </source>
</evidence>
<evidence type="ECO:0000269" key="4">
    <source>
    </source>
</evidence>
<evidence type="ECO:0000269" key="5">
    <source>
    </source>
</evidence>
<evidence type="ECO:0000303" key="6">
    <source>
    </source>
</evidence>
<evidence type="ECO:0000303" key="7">
    <source>
    </source>
</evidence>
<evidence type="ECO:0000303" key="8">
    <source>
    </source>
</evidence>
<evidence type="ECO:0000305" key="9"/>
<keyword id="KW-0025">Alternative splicing</keyword>
<keyword id="KW-0175">Coiled coil</keyword>
<keyword id="KW-0333">Golgi apparatus</keyword>
<keyword id="KW-1267">Proteomics identification</keyword>
<keyword id="KW-1185">Reference proteome</keyword>
<protein>
    <recommendedName>
        <fullName>Janus kinase and microtubule-interacting protein 2</fullName>
    </recommendedName>
    <alternativeName>
        <fullName>CTCL tumor antigen HD-CL-04</fullName>
    </alternativeName>
    <alternativeName>
        <fullName>Neuroendocrine long coiled-coil protein 1</fullName>
    </alternativeName>
</protein>
<reference key="1">
    <citation type="journal article" date="2004" name="Nat. Genet.">
        <title>Complete sequencing and characterization of 21,243 full-length human cDNAs.</title>
        <authorList>
            <person name="Ota T."/>
            <person name="Suzuki Y."/>
            <person name="Nishikawa T."/>
            <person name="Otsuki T."/>
            <person name="Sugiyama T."/>
            <person name="Irie R."/>
            <person name="Wakamatsu A."/>
            <person name="Hayashi K."/>
            <person name="Sato H."/>
            <person name="Nagai K."/>
            <person name="Kimura K."/>
            <person name="Makita H."/>
            <person name="Sekine M."/>
            <person name="Obayashi M."/>
            <person name="Nishi T."/>
            <person name="Shibahara T."/>
            <person name="Tanaka T."/>
            <person name="Ishii S."/>
            <person name="Yamamoto J."/>
            <person name="Saito K."/>
            <person name="Kawai Y."/>
            <person name="Isono Y."/>
            <person name="Nakamura Y."/>
            <person name="Nagahari K."/>
            <person name="Murakami K."/>
            <person name="Yasuda T."/>
            <person name="Iwayanagi T."/>
            <person name="Wagatsuma M."/>
            <person name="Shiratori A."/>
            <person name="Sudo H."/>
            <person name="Hosoiri T."/>
            <person name="Kaku Y."/>
            <person name="Kodaira H."/>
            <person name="Kondo H."/>
            <person name="Sugawara M."/>
            <person name="Takahashi M."/>
            <person name="Kanda K."/>
            <person name="Yokoi T."/>
            <person name="Furuya T."/>
            <person name="Kikkawa E."/>
            <person name="Omura Y."/>
            <person name="Abe K."/>
            <person name="Kamihara K."/>
            <person name="Katsuta N."/>
            <person name="Sato K."/>
            <person name="Tanikawa M."/>
            <person name="Yamazaki M."/>
            <person name="Ninomiya K."/>
            <person name="Ishibashi T."/>
            <person name="Yamashita H."/>
            <person name="Murakawa K."/>
            <person name="Fujimori K."/>
            <person name="Tanai H."/>
            <person name="Kimata M."/>
            <person name="Watanabe M."/>
            <person name="Hiraoka S."/>
            <person name="Chiba Y."/>
            <person name="Ishida S."/>
            <person name="Ono Y."/>
            <person name="Takiguchi S."/>
            <person name="Watanabe S."/>
            <person name="Yosida M."/>
            <person name="Hotuta T."/>
            <person name="Kusano J."/>
            <person name="Kanehori K."/>
            <person name="Takahashi-Fujii A."/>
            <person name="Hara H."/>
            <person name="Tanase T.-O."/>
            <person name="Nomura Y."/>
            <person name="Togiya S."/>
            <person name="Komai F."/>
            <person name="Hara R."/>
            <person name="Takeuchi K."/>
            <person name="Arita M."/>
            <person name="Imose N."/>
            <person name="Musashino K."/>
            <person name="Yuuki H."/>
            <person name="Oshima A."/>
            <person name="Sasaki N."/>
            <person name="Aotsuka S."/>
            <person name="Yoshikawa Y."/>
            <person name="Matsunawa H."/>
            <person name="Ichihara T."/>
            <person name="Shiohata N."/>
            <person name="Sano S."/>
            <person name="Moriya S."/>
            <person name="Momiyama H."/>
            <person name="Satoh N."/>
            <person name="Takami S."/>
            <person name="Terashima Y."/>
            <person name="Suzuki O."/>
            <person name="Nakagawa S."/>
            <person name="Senoh A."/>
            <person name="Mizoguchi H."/>
            <person name="Goto Y."/>
            <person name="Shimizu F."/>
            <person name="Wakebe H."/>
            <person name="Hishigaki H."/>
            <person name="Watanabe T."/>
            <person name="Sugiyama A."/>
            <person name="Takemoto M."/>
            <person name="Kawakami B."/>
            <person name="Yamazaki M."/>
            <person name="Watanabe K."/>
            <person name="Kumagai A."/>
            <person name="Itakura S."/>
            <person name="Fukuzumi Y."/>
            <person name="Fujimori Y."/>
            <person name="Komiyama M."/>
            <person name="Tashiro H."/>
            <person name="Tanigami A."/>
            <person name="Fujiwara T."/>
            <person name="Ono T."/>
            <person name="Yamada K."/>
            <person name="Fujii Y."/>
            <person name="Ozaki K."/>
            <person name="Hirao M."/>
            <person name="Ohmori Y."/>
            <person name="Kawabata A."/>
            <person name="Hikiji T."/>
            <person name="Kobatake N."/>
            <person name="Inagaki H."/>
            <person name="Ikema Y."/>
            <person name="Okamoto S."/>
            <person name="Okitani R."/>
            <person name="Kawakami T."/>
            <person name="Noguchi S."/>
            <person name="Itoh T."/>
            <person name="Shigeta K."/>
            <person name="Senba T."/>
            <person name="Matsumura K."/>
            <person name="Nakajima Y."/>
            <person name="Mizuno T."/>
            <person name="Morinaga M."/>
            <person name="Sasaki M."/>
            <person name="Togashi T."/>
            <person name="Oyama M."/>
            <person name="Hata H."/>
            <person name="Watanabe M."/>
            <person name="Komatsu T."/>
            <person name="Mizushima-Sugano J."/>
            <person name="Satoh T."/>
            <person name="Shirai Y."/>
            <person name="Takahashi Y."/>
            <person name="Nakagawa K."/>
            <person name="Okumura K."/>
            <person name="Nagase T."/>
            <person name="Nomura N."/>
            <person name="Kikuchi H."/>
            <person name="Masuho Y."/>
            <person name="Yamashita R."/>
            <person name="Nakai K."/>
            <person name="Yada T."/>
            <person name="Nakamura Y."/>
            <person name="Ohara O."/>
            <person name="Isogai T."/>
            <person name="Sugano S."/>
        </authorList>
    </citation>
    <scope>NUCLEOTIDE SEQUENCE [LARGE SCALE MRNA] (ISOFORMS 1 AND 4)</scope>
    <source>
        <tissue>Brain</tissue>
    </source>
</reference>
<reference key="2">
    <citation type="journal article" date="2007" name="FEBS Lett.">
        <title>Identification and characterization of two novel (neuro)endocrine long coiled-coil proteins.</title>
        <authorList>
            <person name="Cruz-Garcia D."/>
            <person name="Vazquez-Martinez R."/>
            <person name="Peinado J.R."/>
            <person name="Anouar Y."/>
            <person name="Tonon M.C."/>
            <person name="Vaudry H."/>
            <person name="Castano J.P."/>
            <person name="Malagon M.M."/>
        </authorList>
    </citation>
    <scope>NUCLEOTIDE SEQUENCE [MRNA] (ISOFORM 3)</scope>
    <scope>SUBCELLULAR LOCATION</scope>
    <scope>TISSUE SPECIFICITY</scope>
    <source>
        <tissue>Cervix carcinoma</tissue>
    </source>
</reference>
<reference key="3">
    <citation type="journal article" date="2004" name="Br. J. Dermatol.">
        <title>SEREX identification of new tumour-associated antigens in cutaneous T-cell lymphoma.</title>
        <authorList>
            <person name="Hartmann T.B."/>
            <person name="Thiel D."/>
            <person name="Dummer R."/>
            <person name="Schadendorf D."/>
            <person name="Eichmueller S."/>
        </authorList>
    </citation>
    <scope>NUCLEOTIDE SEQUENCE [MRNA] (ISOFORM 1)</scope>
    <source>
        <tissue>T-cell lymphoma</tissue>
    </source>
</reference>
<reference key="4">
    <citation type="journal article" date="1998" name="DNA Res.">
        <title>Prediction of the coding sequences of unidentified human genes. IX. The complete sequences of 100 new cDNA clones from brain which can code for large proteins in vitro.</title>
        <authorList>
            <person name="Nagase T."/>
            <person name="Ishikawa K."/>
            <person name="Miyajima N."/>
            <person name="Tanaka A."/>
            <person name="Kotani H."/>
            <person name="Nomura N."/>
            <person name="Ohara O."/>
        </authorList>
    </citation>
    <scope>NUCLEOTIDE SEQUENCE [LARGE SCALE MRNA] (ISOFORM 2)</scope>
    <source>
        <tissue>Brain</tissue>
    </source>
</reference>
<reference key="5">
    <citation type="journal article" date="2004" name="Nature">
        <title>The DNA sequence and comparative analysis of human chromosome 5.</title>
        <authorList>
            <person name="Schmutz J."/>
            <person name="Martin J."/>
            <person name="Terry A."/>
            <person name="Couronne O."/>
            <person name="Grimwood J."/>
            <person name="Lowry S."/>
            <person name="Gordon L.A."/>
            <person name="Scott D."/>
            <person name="Xie G."/>
            <person name="Huang W."/>
            <person name="Hellsten U."/>
            <person name="Tran-Gyamfi M."/>
            <person name="She X."/>
            <person name="Prabhakar S."/>
            <person name="Aerts A."/>
            <person name="Altherr M."/>
            <person name="Bajorek E."/>
            <person name="Black S."/>
            <person name="Branscomb E."/>
            <person name="Caoile C."/>
            <person name="Challacombe J.F."/>
            <person name="Chan Y.M."/>
            <person name="Denys M."/>
            <person name="Detter J.C."/>
            <person name="Escobar J."/>
            <person name="Flowers D."/>
            <person name="Fotopulos D."/>
            <person name="Glavina T."/>
            <person name="Gomez M."/>
            <person name="Gonzales E."/>
            <person name="Goodstein D."/>
            <person name="Grigoriev I."/>
            <person name="Groza M."/>
            <person name="Hammon N."/>
            <person name="Hawkins T."/>
            <person name="Haydu L."/>
            <person name="Israni S."/>
            <person name="Jett J."/>
            <person name="Kadner K."/>
            <person name="Kimball H."/>
            <person name="Kobayashi A."/>
            <person name="Lopez F."/>
            <person name="Lou Y."/>
            <person name="Martinez D."/>
            <person name="Medina C."/>
            <person name="Morgan J."/>
            <person name="Nandkeshwar R."/>
            <person name="Noonan J.P."/>
            <person name="Pitluck S."/>
            <person name="Pollard M."/>
            <person name="Predki P."/>
            <person name="Priest J."/>
            <person name="Ramirez L."/>
            <person name="Retterer J."/>
            <person name="Rodriguez A."/>
            <person name="Rogers S."/>
            <person name="Salamov A."/>
            <person name="Salazar A."/>
            <person name="Thayer N."/>
            <person name="Tice H."/>
            <person name="Tsai M."/>
            <person name="Ustaszewska A."/>
            <person name="Vo N."/>
            <person name="Wheeler J."/>
            <person name="Wu K."/>
            <person name="Yang J."/>
            <person name="Dickson M."/>
            <person name="Cheng J.-F."/>
            <person name="Eichler E.E."/>
            <person name="Olsen A."/>
            <person name="Pennacchio L.A."/>
            <person name="Rokhsar D.S."/>
            <person name="Richardson P."/>
            <person name="Lucas S.M."/>
            <person name="Myers R.M."/>
            <person name="Rubin E.M."/>
        </authorList>
    </citation>
    <scope>NUCLEOTIDE SEQUENCE [LARGE SCALE GENOMIC DNA]</scope>
</reference>
<reference key="6">
    <citation type="submission" date="2005-07" db="EMBL/GenBank/DDBJ databases">
        <authorList>
            <person name="Mural R.J."/>
            <person name="Istrail S."/>
            <person name="Sutton G.G."/>
            <person name="Florea L."/>
            <person name="Halpern A.L."/>
            <person name="Mobarry C.M."/>
            <person name="Lippert R."/>
            <person name="Walenz B."/>
            <person name="Shatkay H."/>
            <person name="Dew I."/>
            <person name="Miller J.R."/>
            <person name="Flanigan M.J."/>
            <person name="Edwards N.J."/>
            <person name="Bolanos R."/>
            <person name="Fasulo D."/>
            <person name="Halldorsson B.V."/>
            <person name="Hannenhalli S."/>
            <person name="Turner R."/>
            <person name="Yooseph S."/>
            <person name="Lu F."/>
            <person name="Nusskern D.R."/>
            <person name="Shue B.C."/>
            <person name="Zheng X.H."/>
            <person name="Zhong F."/>
            <person name="Delcher A.L."/>
            <person name="Huson D.H."/>
            <person name="Kravitz S.A."/>
            <person name="Mouchard L."/>
            <person name="Reinert K."/>
            <person name="Remington K.A."/>
            <person name="Clark A.G."/>
            <person name="Waterman M.S."/>
            <person name="Eichler E.E."/>
            <person name="Adams M.D."/>
            <person name="Hunkapiller M.W."/>
            <person name="Myers E.W."/>
            <person name="Venter J.C."/>
        </authorList>
    </citation>
    <scope>NUCLEOTIDE SEQUENCE [LARGE SCALE GENOMIC DNA]</scope>
</reference>
<reference key="7">
    <citation type="journal article" date="2004" name="Genome Res.">
        <title>The status, quality, and expansion of the NIH full-length cDNA project: the Mammalian Gene Collection (MGC).</title>
        <authorList>
            <consortium name="The MGC Project Team"/>
        </authorList>
    </citation>
    <scope>NUCLEOTIDE SEQUENCE [LARGE SCALE MRNA] (ISOFORM 1)</scope>
    <source>
        <tissue>Muscle</tissue>
    </source>
</reference>
<reference key="8">
    <citation type="journal article" date="2004" name="J. Biol. Chem.">
        <title>Jamip1 (marlin-1) defines a family of proteins interacting with Janus kinases and microtubules.</title>
        <authorList>
            <person name="Steindler C."/>
            <person name="Li Z."/>
            <person name="Algarte M."/>
            <person name="Alcover A."/>
            <person name="Libri V."/>
            <person name="Ragimbeau J."/>
            <person name="Pellegrini S."/>
        </authorList>
    </citation>
    <scope>TISSUE SPECIFICITY</scope>
</reference>
<reference key="9">
    <citation type="journal article" date="2006" name="Science">
        <title>The consensus coding sequences of human breast and colorectal cancers.</title>
        <authorList>
            <person name="Sjoeblom T."/>
            <person name="Jones S."/>
            <person name="Wood L.D."/>
            <person name="Parsons D.W."/>
            <person name="Lin J."/>
            <person name="Barber T.D."/>
            <person name="Mandelker D."/>
            <person name="Leary R.J."/>
            <person name="Ptak J."/>
            <person name="Silliman N."/>
            <person name="Szabo S."/>
            <person name="Buckhaults P."/>
            <person name="Farrell C."/>
            <person name="Meeh P."/>
            <person name="Markowitz S.D."/>
            <person name="Willis J."/>
            <person name="Dawson D."/>
            <person name="Willson J.K.V."/>
            <person name="Gazdar A.F."/>
            <person name="Hartigan J."/>
            <person name="Wu L."/>
            <person name="Liu C."/>
            <person name="Parmigiani G."/>
            <person name="Park B.H."/>
            <person name="Bachman K.E."/>
            <person name="Papadopoulos N."/>
            <person name="Vogelstein B."/>
            <person name="Kinzler K.W."/>
            <person name="Velculescu V.E."/>
        </authorList>
    </citation>
    <scope>VARIANT [LARGE SCALE ANALYSIS] CYS-315</scope>
</reference>
<sequence>MSKKGRNKGEKPEALIVALQAANEDLRTKLTDIQIELHQEKSKVSKLEREKTQEAKRIRELEQRKHTVLVTELKAKLHEEKMKELQAVRENLIKQHEQEMSRTVKVRDGEIQRLKSALCALRDGSSDKVRTALTIEAREEARKLFDTERLKLLQEIADLKTAKKQVDEALSNMIQADKIKAGDLRSEHQSHQEAISKIKWESERDIRRLMDEIKAKDRIIFSLEKELETQTGYVQKLQLQKEALDEQLFLVKEAECNMSSPKREIPGRAGDGSEHCSSPDLRRNQKRIAELNATIRKLEDRNTLLGDERNELLKRVRETEKQCKPLLERNKCLAKRNDELMVSLQRMEEKLKAVTKENSEMREKITSHPPLKKLKSLNDLDQANEEQETEFLKLQVIEQQNIIDELTRDREKLIRRRKHRRSSKPIKRPVLDPFIGYDEDSMDSETSSMASFRTDRTPATPDDDLDESLAAEESELRFRQLTKEYQALQRAYALLQEQTGGIIDAEREAKAQEQLQAEVLRYKAKIEDLEATLAQKGQDSHWVEDKQLFIKRNQELLEKIEKQEAENHRLQQELQDARDQNELLEFRNLELEERERRSPPFNLQIHPFSDGVSALQIYCMKEGVKDVNIPDLIKQLDILGDNGNLRNEEQVAIIQASTVLSLAEKWIQQIEGAEAALHQKMMELESDMEQFCKIKGYLEEELDYRKQALDQAYMRIQELEATLYNALQQETVIKFGELLSEKQQEELRTAVEKLRRQMLRKSREYDCQILQERMELLQQAHQRIRDLEDKTDIQKRQIKDLEEKSNRKHG</sequence>
<dbReference type="EMBL" id="AK291280">
    <property type="protein sequence ID" value="BAF83969.1"/>
    <property type="molecule type" value="mRNA"/>
</dbReference>
<dbReference type="EMBL" id="AK299724">
    <property type="protein sequence ID" value="BAG61622.1"/>
    <property type="molecule type" value="mRNA"/>
</dbReference>
<dbReference type="EMBL" id="EF512550">
    <property type="protein sequence ID" value="ABP62932.1"/>
    <property type="molecule type" value="mRNA"/>
</dbReference>
<dbReference type="EMBL" id="AF273057">
    <property type="protein sequence ID" value="AAM44460.1"/>
    <property type="molecule type" value="mRNA"/>
</dbReference>
<dbReference type="EMBL" id="AB011127">
    <property type="protein sequence ID" value="BAA25481.2"/>
    <property type="status" value="ALT_FRAME"/>
    <property type="molecule type" value="mRNA"/>
</dbReference>
<dbReference type="EMBL" id="AC011370">
    <property type="status" value="NOT_ANNOTATED_CDS"/>
    <property type="molecule type" value="Genomic_DNA"/>
</dbReference>
<dbReference type="EMBL" id="AC011415">
    <property type="status" value="NOT_ANNOTATED_CDS"/>
    <property type="molecule type" value="Genomic_DNA"/>
</dbReference>
<dbReference type="EMBL" id="AC126775">
    <property type="status" value="NOT_ANNOTATED_CDS"/>
    <property type="molecule type" value="Genomic_DNA"/>
</dbReference>
<dbReference type="EMBL" id="CH471062">
    <property type="protein sequence ID" value="EAW61820.1"/>
    <property type="molecule type" value="Genomic_DNA"/>
</dbReference>
<dbReference type="EMBL" id="CH471062">
    <property type="protein sequence ID" value="EAW61821.1"/>
    <property type="molecule type" value="Genomic_DNA"/>
</dbReference>
<dbReference type="EMBL" id="BC017354">
    <property type="protein sequence ID" value="AAH17354.1"/>
    <property type="molecule type" value="mRNA"/>
</dbReference>
<dbReference type="CCDS" id="CCDS4285.1">
    <molecule id="Q96AA8-1"/>
</dbReference>
<dbReference type="CCDS" id="CCDS59495.1">
    <molecule id="Q96AA8-2"/>
</dbReference>
<dbReference type="CCDS" id="CCDS64284.1">
    <molecule id="Q96AA8-4"/>
</dbReference>
<dbReference type="CCDS" id="CCDS75352.1">
    <molecule id="Q96AA8-3"/>
</dbReference>
<dbReference type="PIR" id="T00331">
    <property type="entry name" value="T00331"/>
</dbReference>
<dbReference type="RefSeq" id="NP_001257863.1">
    <molecule id="Q96AA8-2"/>
    <property type="nucleotide sequence ID" value="NM_001270934.2"/>
</dbReference>
<dbReference type="RefSeq" id="NP_001257870.1">
    <molecule id="Q96AA8-3"/>
    <property type="nucleotide sequence ID" value="NM_001270941.2"/>
</dbReference>
<dbReference type="RefSeq" id="NP_001269211.1">
    <molecule id="Q96AA8-4"/>
    <property type="nucleotide sequence ID" value="NM_001282282.2"/>
</dbReference>
<dbReference type="RefSeq" id="NP_055605.2">
    <molecule id="Q96AA8-1"/>
    <property type="nucleotide sequence ID" value="NM_014790.4"/>
</dbReference>
<dbReference type="RefSeq" id="XP_016865586.1">
    <property type="nucleotide sequence ID" value="XM_017010097.1"/>
</dbReference>
<dbReference type="RefSeq" id="XP_047273905.1">
    <molecule id="Q96AA8-3"/>
    <property type="nucleotide sequence ID" value="XM_047417949.1"/>
</dbReference>
<dbReference type="RefSeq" id="XP_047273906.1">
    <molecule id="Q96AA8-2"/>
    <property type="nucleotide sequence ID" value="XM_047417950.1"/>
</dbReference>
<dbReference type="RefSeq" id="XP_054209892.1">
    <molecule id="Q96AA8-3"/>
    <property type="nucleotide sequence ID" value="XM_054353917.1"/>
</dbReference>
<dbReference type="RefSeq" id="XP_054209893.1">
    <molecule id="Q96AA8-2"/>
    <property type="nucleotide sequence ID" value="XM_054353918.1"/>
</dbReference>
<dbReference type="SMR" id="Q96AA8"/>
<dbReference type="BioGRID" id="115170">
    <property type="interactions" value="24"/>
</dbReference>
<dbReference type="FunCoup" id="Q96AA8">
    <property type="interactions" value="473"/>
</dbReference>
<dbReference type="IntAct" id="Q96AA8">
    <property type="interactions" value="23"/>
</dbReference>
<dbReference type="MINT" id="Q96AA8"/>
<dbReference type="STRING" id="9606.ENSP00000479248"/>
<dbReference type="iPTMnet" id="Q96AA8"/>
<dbReference type="PhosphoSitePlus" id="Q96AA8"/>
<dbReference type="BioMuta" id="JAKMIP2"/>
<dbReference type="DMDM" id="20140696"/>
<dbReference type="jPOST" id="Q96AA8"/>
<dbReference type="MassIVE" id="Q96AA8"/>
<dbReference type="PaxDb" id="9606-ENSP00000479248"/>
<dbReference type="PeptideAtlas" id="Q96AA8"/>
<dbReference type="ProteomicsDB" id="34078"/>
<dbReference type="ProteomicsDB" id="5023"/>
<dbReference type="ProteomicsDB" id="75942">
    <molecule id="Q96AA8-1"/>
</dbReference>
<dbReference type="ProteomicsDB" id="75943">
    <molecule id="Q96AA8-2"/>
</dbReference>
<dbReference type="ProteomicsDB" id="75944">
    <molecule id="Q96AA8-3"/>
</dbReference>
<dbReference type="Antibodypedia" id="45665">
    <property type="antibodies" value="203 antibodies from 31 providers"/>
</dbReference>
<dbReference type="DNASU" id="9832"/>
<dbReference type="Ensembl" id="ENST00000265272.9">
    <molecule id="Q96AA8-1"/>
    <property type="protein sequence ID" value="ENSP00000265272.5"/>
    <property type="gene ID" value="ENSG00000176049.16"/>
</dbReference>
<dbReference type="Ensembl" id="ENST00000333010.6">
    <molecule id="Q96AA8-4"/>
    <property type="protein sequence ID" value="ENSP00000328989.6"/>
    <property type="gene ID" value="ENSG00000176049.16"/>
</dbReference>
<dbReference type="Ensembl" id="ENST00000507386.5">
    <molecule id="Q96AA8-2"/>
    <property type="protein sequence ID" value="ENSP00000421398.1"/>
    <property type="gene ID" value="ENSG00000176049.16"/>
</dbReference>
<dbReference type="Ensembl" id="ENST00000616793.5">
    <molecule id="Q96AA8-3"/>
    <property type="protein sequence ID" value="ENSP00000479248.1"/>
    <property type="gene ID" value="ENSG00000176049.16"/>
</dbReference>
<dbReference type="GeneID" id="9832"/>
<dbReference type="KEGG" id="hsa:9832"/>
<dbReference type="MANE-Select" id="ENST00000616793.5">
    <molecule id="Q96AA8-3"/>
    <property type="protein sequence ID" value="ENSP00000479248.1"/>
    <property type="RefSeq nucleotide sequence ID" value="NM_001270941.2"/>
    <property type="RefSeq protein sequence ID" value="NP_001257870.1"/>
</dbReference>
<dbReference type="UCSC" id="uc003loq.3">
    <molecule id="Q96AA8-1"/>
    <property type="organism name" value="human"/>
</dbReference>
<dbReference type="AGR" id="HGNC:29067"/>
<dbReference type="CTD" id="9832"/>
<dbReference type="DisGeNET" id="9832"/>
<dbReference type="GeneCards" id="JAKMIP2"/>
<dbReference type="HGNC" id="HGNC:29067">
    <property type="gene designation" value="JAKMIP2"/>
</dbReference>
<dbReference type="HPA" id="ENSG00000176049">
    <property type="expression patterns" value="Tissue enhanced (brain, pituitary gland)"/>
</dbReference>
<dbReference type="MIM" id="611197">
    <property type="type" value="gene"/>
</dbReference>
<dbReference type="neXtProt" id="NX_Q96AA8"/>
<dbReference type="OpenTargets" id="ENSG00000176049"/>
<dbReference type="PharmGKB" id="PA143485509"/>
<dbReference type="VEuPathDB" id="HostDB:ENSG00000176049"/>
<dbReference type="eggNOG" id="ENOG502QTTJ">
    <property type="taxonomic scope" value="Eukaryota"/>
</dbReference>
<dbReference type="GeneTree" id="ENSGT00940000153713"/>
<dbReference type="HOGENOM" id="CLU_020294_1_0_1"/>
<dbReference type="InParanoid" id="Q96AA8"/>
<dbReference type="OMA" id="RNLELEX"/>
<dbReference type="OrthoDB" id="6424487at2759"/>
<dbReference type="PAN-GO" id="Q96AA8">
    <property type="GO annotations" value="0 GO annotations based on evolutionary models"/>
</dbReference>
<dbReference type="PhylomeDB" id="Q96AA8"/>
<dbReference type="TreeFam" id="TF331900"/>
<dbReference type="PathwayCommons" id="Q96AA8"/>
<dbReference type="SignaLink" id="Q96AA8"/>
<dbReference type="BioGRID-ORCS" id="9832">
    <property type="hits" value="7 hits in 1133 CRISPR screens"/>
</dbReference>
<dbReference type="ChiTaRS" id="JAKMIP2">
    <property type="organism name" value="human"/>
</dbReference>
<dbReference type="GenomeRNAi" id="9832"/>
<dbReference type="Pharos" id="Q96AA8">
    <property type="development level" value="Tbio"/>
</dbReference>
<dbReference type="PRO" id="PR:Q96AA8"/>
<dbReference type="Proteomes" id="UP000005640">
    <property type="component" value="Chromosome 5"/>
</dbReference>
<dbReference type="RNAct" id="Q96AA8">
    <property type="molecule type" value="protein"/>
</dbReference>
<dbReference type="Bgee" id="ENSG00000176049">
    <property type="expression patterns" value="Expressed in adrenal tissue and 146 other cell types or tissues"/>
</dbReference>
<dbReference type="GO" id="GO:0005794">
    <property type="term" value="C:Golgi apparatus"/>
    <property type="evidence" value="ECO:0000314"/>
    <property type="project" value="HPA"/>
</dbReference>
<dbReference type="GO" id="GO:0019900">
    <property type="term" value="F:kinase binding"/>
    <property type="evidence" value="ECO:0007669"/>
    <property type="project" value="InterPro"/>
</dbReference>
<dbReference type="GO" id="GO:0008017">
    <property type="term" value="F:microtubule binding"/>
    <property type="evidence" value="ECO:0007669"/>
    <property type="project" value="InterPro"/>
</dbReference>
<dbReference type="InterPro" id="IPR024836">
    <property type="entry name" value="JAKMIP"/>
</dbReference>
<dbReference type="InterPro" id="IPR031994">
    <property type="entry name" value="JAKMIP_C"/>
</dbReference>
<dbReference type="PANTHER" id="PTHR18935">
    <property type="entry name" value="GOLGIN SUBFAMILY A MEMBER 4-LIKE ISOFORM X1"/>
    <property type="match status" value="1"/>
</dbReference>
<dbReference type="PANTHER" id="PTHR18935:SF7">
    <property type="entry name" value="JANUS KINASE AND MICROTUBULE-INTERACTING PROTEIN 2"/>
    <property type="match status" value="1"/>
</dbReference>
<dbReference type="Pfam" id="PF16034">
    <property type="entry name" value="JAKMIP_CC3"/>
    <property type="match status" value="1"/>
</dbReference>
<feature type="chain" id="PRO_0000050762" description="Janus kinase and microtubule-interacting protein 2">
    <location>
        <begin position="1"/>
        <end position="810"/>
    </location>
</feature>
<feature type="region of interest" description="Disordered" evidence="2">
    <location>
        <begin position="261"/>
        <end position="280"/>
    </location>
</feature>
<feature type="region of interest" description="Disordered" evidence="2">
    <location>
        <begin position="437"/>
        <end position="465"/>
    </location>
</feature>
<feature type="coiled-coil region" evidence="1">
    <location>
        <begin position="13"/>
        <end position="102"/>
    </location>
</feature>
<feature type="coiled-coil region" evidence="1">
    <location>
        <begin position="148"/>
        <end position="178"/>
    </location>
</feature>
<feature type="coiled-coil region" evidence="1">
    <location>
        <begin position="207"/>
        <end position="244"/>
    </location>
</feature>
<feature type="coiled-coil region" evidence="1">
    <location>
        <begin position="280"/>
        <end position="419"/>
    </location>
</feature>
<feature type="coiled-coil region" evidence="1">
    <location>
        <begin position="468"/>
        <end position="597"/>
    </location>
</feature>
<feature type="coiled-coil region" evidence="1">
    <location>
        <begin position="664"/>
        <end position="808"/>
    </location>
</feature>
<feature type="compositionally biased region" description="Basic and acidic residues" evidence="2">
    <location>
        <begin position="261"/>
        <end position="274"/>
    </location>
</feature>
<feature type="splice variant" id="VSP_055264" description="In isoform 4." evidence="6">
    <original>MSKKGRNKGEKPEALIVALQAANEDLRTKLTDIQIELHQEKSK</original>
    <variation>M</variation>
    <location>
        <begin position="1"/>
        <end position="43"/>
    </location>
</feature>
<feature type="splice variant" id="VSP_002430" description="In isoform 2." evidence="8">
    <location>
        <begin position="539"/>
        <end position="559"/>
    </location>
</feature>
<feature type="splice variant" id="VSP_028230" description="In isoform 2, isoform 3 and isoform 4." evidence="6 7 8">
    <original>SNRKHG</original>
    <variation>FLFLFLFFSLAFILWP</variation>
    <location>
        <begin position="805"/>
        <end position="810"/>
    </location>
</feature>
<feature type="sequence variant" id="VAR_022059" description="In dbSNP:rs3749736.">
    <original>V</original>
    <variation>I</variation>
    <location>
        <position position="106"/>
    </location>
</feature>
<feature type="sequence variant" id="VAR_035930" description="In a colorectal cancer sample; somatic mutation; dbSNP:rs761359853." evidence="4">
    <original>R</original>
    <variation>C</variation>
    <location>
        <position position="315"/>
    </location>
</feature>
<comment type="interaction">
    <interactant intactId="EBI-752007">
        <id>Q96AA8</id>
    </interactant>
    <interactant intactId="EBI-347573">
        <id>A6NC98</id>
        <label>CCDC88B</label>
    </interactant>
    <organismsDiffer>false</organismsDiffer>
    <experiments>3</experiments>
</comment>
<comment type="interaction">
    <interactant intactId="EBI-752007">
        <id>Q96AA8</id>
    </interactant>
    <interactant intactId="EBI-10257534">
        <id>Q7Z460-4</id>
        <label>CLASP1</label>
    </interactant>
    <organismsDiffer>false</organismsDiffer>
    <experiments>3</experiments>
</comment>
<comment type="interaction">
    <interactant intactId="EBI-752007">
        <id>Q96AA8</id>
    </interactant>
    <interactant intactId="EBI-5655540">
        <id>Q8N3C7</id>
        <label>CLIP4</label>
    </interactant>
    <organismsDiffer>false</organismsDiffer>
    <experiments>7</experiments>
</comment>
<comment type="interaction">
    <interactant intactId="EBI-752007">
        <id>Q96AA8</id>
    </interactant>
    <interactant intactId="EBI-2349927">
        <id>Q5JST6</id>
        <label>EFHC2</label>
    </interactant>
    <organismsDiffer>false</organismsDiffer>
    <experiments>3</experiments>
</comment>
<comment type="interaction">
    <interactant intactId="EBI-752007">
        <id>Q96AA8</id>
    </interactant>
    <interactant intactId="EBI-742350">
        <id>Q14241</id>
        <label>ELOA</label>
    </interactant>
    <organismsDiffer>false</organismsDiffer>
    <experiments>3</experiments>
</comment>
<comment type="interaction">
    <interactant intactId="EBI-752007">
        <id>Q96AA8</id>
    </interactant>
    <interactant intactId="EBI-740220">
        <id>O14964</id>
        <label>HGS</label>
    </interactant>
    <organismsDiffer>false</organismsDiffer>
    <experiments>3</experiments>
</comment>
<comment type="interaction">
    <interactant intactId="EBI-752007">
        <id>Q96AA8</id>
    </interactant>
    <interactant intactId="EBI-5453723">
        <id>Q9Y3B7</id>
        <label>MRPL11</label>
    </interactant>
    <organismsDiffer>false</organismsDiffer>
    <experiments>3</experiments>
</comment>
<comment type="interaction">
    <interactant intactId="EBI-752007">
        <id>Q96AA8</id>
    </interactant>
    <interactant intactId="EBI-8641936">
        <id>Q15742</id>
        <label>NAB2</label>
    </interactant>
    <organismsDiffer>false</organismsDiffer>
    <experiments>3</experiments>
</comment>
<comment type="interaction">
    <interactant intactId="EBI-752007">
        <id>Q96AA8</id>
    </interactant>
    <interactant intactId="EBI-714158">
        <id>Q13526</id>
        <label>PIN1</label>
    </interactant>
    <organismsDiffer>false</organismsDiffer>
    <experiments>4</experiments>
</comment>
<comment type="interaction">
    <interactant intactId="EBI-752007">
        <id>Q96AA8</id>
    </interactant>
    <interactant intactId="EBI-1567797">
        <id>Q8WWY3</id>
        <label>PRPF31</label>
    </interactant>
    <organismsDiffer>false</organismsDiffer>
    <experiments>8</experiments>
</comment>
<comment type="interaction">
    <interactant intactId="EBI-752007">
        <id>Q96AA8</id>
    </interactant>
    <interactant intactId="EBI-455078">
        <id>Q969G3</id>
        <label>SMARCE1</label>
    </interactant>
    <organismsDiffer>false</organismsDiffer>
    <experiments>3</experiments>
</comment>
<comment type="interaction">
    <interactant intactId="EBI-752007">
        <id>Q96AA8</id>
    </interactant>
    <interactant intactId="EBI-2799833">
        <id>Q8N1B4</id>
        <label>VPS52</label>
    </interactant>
    <organismsDiffer>false</organismsDiffer>
    <experiments>3</experiments>
</comment>
<comment type="interaction">
    <interactant intactId="EBI-752007">
        <id>Q96AA8</id>
    </interactant>
    <interactant intactId="EBI-744493">
        <id>O14978</id>
        <label>ZNF263</label>
    </interactant>
    <organismsDiffer>false</organismsDiffer>
    <experiments>3</experiments>
</comment>
<comment type="interaction">
    <interactant intactId="EBI-752007">
        <id>Q96AA8</id>
    </interactant>
    <interactant intactId="EBI-10174671">
        <id>A8K932</id>
    </interactant>
    <organismsDiffer>false</organismsDiffer>
    <experiments>3</experiments>
</comment>
<comment type="subcellular location">
    <subcellularLocation>
        <location evidence="5">Golgi apparatus</location>
    </subcellularLocation>
</comment>
<comment type="alternative products">
    <event type="alternative splicing"/>
    <isoform>
        <id>Q96AA8-1</id>
        <name>1</name>
        <sequence type="displayed"/>
    </isoform>
    <isoform>
        <id>Q96AA8-2</id>
        <name>2</name>
        <sequence type="described" ref="VSP_002430 VSP_028230"/>
    </isoform>
    <isoform>
        <id>Q96AA8-3</id>
        <name>3</name>
        <sequence type="described" ref="VSP_028230"/>
    </isoform>
    <isoform>
        <id>Q96AA8-4</id>
        <name>4</name>
        <sequence type="described" ref="VSP_055264 VSP_028230"/>
    </isoform>
</comment>
<comment type="tissue specificity">
    <text evidence="3 5">Highly expressed in brain, moderately expressed in thymus, spleen and lung, and weakly expressed in kidney, liver and peripheral blood lymphocytes. Also expressed in adrenal and pituitary glands, as well as testis.</text>
</comment>
<comment type="similarity">
    <text evidence="9">Belongs to the JAKMIP family.</text>
</comment>
<comment type="sequence caution" evidence="9">
    <conflict type="frameshift">
        <sequence resource="EMBL-CDS" id="BAA25481"/>
    </conflict>
</comment>
<proteinExistence type="evidence at protein level"/>
<organism>
    <name type="scientific">Homo sapiens</name>
    <name type="common">Human</name>
    <dbReference type="NCBI Taxonomy" id="9606"/>
    <lineage>
        <taxon>Eukaryota</taxon>
        <taxon>Metazoa</taxon>
        <taxon>Chordata</taxon>
        <taxon>Craniata</taxon>
        <taxon>Vertebrata</taxon>
        <taxon>Euteleostomi</taxon>
        <taxon>Mammalia</taxon>
        <taxon>Eutheria</taxon>
        <taxon>Euarchontoglires</taxon>
        <taxon>Primates</taxon>
        <taxon>Haplorrhini</taxon>
        <taxon>Catarrhini</taxon>
        <taxon>Hominidae</taxon>
        <taxon>Homo</taxon>
    </lineage>
</organism>
<accession>Q96AA8</accession>
<accession>A4ZZA7</accession>
<accession>A8K5G5</accession>
<accession>B4DSG0</accession>
<accession>G5E9Y0</accession>
<accession>O60302</accession>
<accession>Q548S1</accession>
<gene>
    <name type="primary">JAKMIP2</name>
    <name type="synonym">JAMIP2</name>
    <name type="synonym">KIAA0555</name>
    <name type="synonym">NECC1</name>
</gene>